<dbReference type="EMBL" id="FM209186">
    <property type="protein sequence ID" value="CAW26325.1"/>
    <property type="molecule type" value="Genomic_DNA"/>
</dbReference>
<dbReference type="RefSeq" id="WP_003091959.1">
    <property type="nucleotide sequence ID" value="NC_011770.1"/>
</dbReference>
<dbReference type="SMR" id="B7UYN4"/>
<dbReference type="KEGG" id="pag:PLES_15971"/>
<dbReference type="HOGENOM" id="CLU_186759_2_0_6"/>
<dbReference type="Gene3D" id="1.10.10.610">
    <property type="entry name" value="YehU-like"/>
    <property type="match status" value="1"/>
</dbReference>
<dbReference type="HAMAP" id="MF_00690">
    <property type="entry name" value="UPF0270"/>
    <property type="match status" value="1"/>
</dbReference>
<dbReference type="InterPro" id="IPR010648">
    <property type="entry name" value="UPF0270"/>
</dbReference>
<dbReference type="InterPro" id="IPR036685">
    <property type="entry name" value="YehU-like_sf"/>
</dbReference>
<dbReference type="NCBIfam" id="NF001441">
    <property type="entry name" value="PRK00304.1"/>
    <property type="match status" value="1"/>
</dbReference>
<dbReference type="Pfam" id="PF06794">
    <property type="entry name" value="UPF0270"/>
    <property type="match status" value="1"/>
</dbReference>
<dbReference type="PIRSF" id="PIRSF006169">
    <property type="entry name" value="UCP006169"/>
    <property type="match status" value="1"/>
</dbReference>
<dbReference type="SUPFAM" id="SSF118001">
    <property type="entry name" value="YehU-like"/>
    <property type="match status" value="1"/>
</dbReference>
<accession>B7UYN4</accession>
<feature type="chain" id="PRO_1000132018" description="UPF0270 protein PLES_15971">
    <location>
        <begin position="1"/>
        <end position="76"/>
    </location>
</feature>
<protein>
    <recommendedName>
        <fullName evidence="1">UPF0270 protein PLES_15971</fullName>
    </recommendedName>
</protein>
<name>Y1597_PSEA8</name>
<organism>
    <name type="scientific">Pseudomonas aeruginosa (strain LESB58)</name>
    <dbReference type="NCBI Taxonomy" id="557722"/>
    <lineage>
        <taxon>Bacteria</taxon>
        <taxon>Pseudomonadati</taxon>
        <taxon>Pseudomonadota</taxon>
        <taxon>Gammaproteobacteria</taxon>
        <taxon>Pseudomonadales</taxon>
        <taxon>Pseudomonadaceae</taxon>
        <taxon>Pseudomonas</taxon>
    </lineage>
</organism>
<evidence type="ECO:0000255" key="1">
    <source>
        <dbReference type="HAMAP-Rule" id="MF_00690"/>
    </source>
</evidence>
<sequence>MLIPHDLLEADTLNNLLEDFVTREGTDNGDETPLDVRVERARHALRRGEAVILFDPESQQCQLMLRSEVPAELLRD</sequence>
<reference key="1">
    <citation type="journal article" date="2009" name="Genome Res.">
        <title>Newly introduced genomic prophage islands are critical determinants of in vivo competitiveness in the Liverpool epidemic strain of Pseudomonas aeruginosa.</title>
        <authorList>
            <person name="Winstanley C."/>
            <person name="Langille M.G.I."/>
            <person name="Fothergill J.L."/>
            <person name="Kukavica-Ibrulj I."/>
            <person name="Paradis-Bleau C."/>
            <person name="Sanschagrin F."/>
            <person name="Thomson N.R."/>
            <person name="Winsor G.L."/>
            <person name="Quail M.A."/>
            <person name="Lennard N."/>
            <person name="Bignell A."/>
            <person name="Clarke L."/>
            <person name="Seeger K."/>
            <person name="Saunders D."/>
            <person name="Harris D."/>
            <person name="Parkhill J."/>
            <person name="Hancock R.E.W."/>
            <person name="Brinkman F.S.L."/>
            <person name="Levesque R.C."/>
        </authorList>
    </citation>
    <scope>NUCLEOTIDE SEQUENCE [LARGE SCALE GENOMIC DNA]</scope>
    <source>
        <strain>LESB58</strain>
    </source>
</reference>
<comment type="similarity">
    <text evidence="1">Belongs to the UPF0270 family.</text>
</comment>
<proteinExistence type="inferred from homology"/>
<gene>
    <name type="ordered locus">PLES_15971</name>
</gene>